<evidence type="ECO:0000255" key="1">
    <source>
        <dbReference type="HAMAP-Rule" id="MF_00151"/>
    </source>
</evidence>
<sequence>MKHLAIYPGSFDPLTKGHLDILQRSLGLFDKVIIAIAVNSNKSTLFSIEERLGFIREVTKGMKGLEIDTFQGLTVDYCNKVGANSIIRGLRAVTDFDYEYAISLMNKKLAPNVETVFLMSSGEYSFISSTIVKEVARHGRDVSNQVPEIVSKALLKKLSQ</sequence>
<gene>
    <name evidence="1" type="primary">coaD</name>
    <name type="ordered locus">LIC_13325</name>
</gene>
<accession>Q72M66</accession>
<name>COAD_LEPIC</name>
<proteinExistence type="inferred from homology"/>
<reference key="1">
    <citation type="journal article" date="2004" name="J. Bacteriol.">
        <title>Comparative genomics of two Leptospira interrogans serovars reveals novel insights into physiology and pathogenesis.</title>
        <authorList>
            <person name="Nascimento A.L.T.O."/>
            <person name="Ko A.I."/>
            <person name="Martins E.A.L."/>
            <person name="Monteiro-Vitorello C.B."/>
            <person name="Ho P.L."/>
            <person name="Haake D.A."/>
            <person name="Verjovski-Almeida S."/>
            <person name="Hartskeerl R.A."/>
            <person name="Marques M.V."/>
            <person name="Oliveira M.C."/>
            <person name="Menck C.F.M."/>
            <person name="Leite L.C.C."/>
            <person name="Carrer H."/>
            <person name="Coutinho L.L."/>
            <person name="Degrave W.M."/>
            <person name="Dellagostin O.A."/>
            <person name="El-Dorry H."/>
            <person name="Ferro E.S."/>
            <person name="Ferro M.I.T."/>
            <person name="Furlan L.R."/>
            <person name="Gamberini M."/>
            <person name="Giglioti E.A."/>
            <person name="Goes-Neto A."/>
            <person name="Goldman G.H."/>
            <person name="Goldman M.H.S."/>
            <person name="Harakava R."/>
            <person name="Jeronimo S.M.B."/>
            <person name="Junqueira-de-Azevedo I.L.M."/>
            <person name="Kimura E.T."/>
            <person name="Kuramae E.E."/>
            <person name="Lemos E.G.M."/>
            <person name="Lemos M.V.F."/>
            <person name="Marino C.L."/>
            <person name="Nunes L.R."/>
            <person name="de Oliveira R.C."/>
            <person name="Pereira G.G."/>
            <person name="Reis M.S."/>
            <person name="Schriefer A."/>
            <person name="Siqueira W.J."/>
            <person name="Sommer P."/>
            <person name="Tsai S.M."/>
            <person name="Simpson A.J.G."/>
            <person name="Ferro J.A."/>
            <person name="Camargo L.E.A."/>
            <person name="Kitajima J.P."/>
            <person name="Setubal J.C."/>
            <person name="Van Sluys M.A."/>
        </authorList>
    </citation>
    <scope>NUCLEOTIDE SEQUENCE [LARGE SCALE GENOMIC DNA]</scope>
    <source>
        <strain>Fiocruz L1-130</strain>
    </source>
</reference>
<keyword id="KW-0067">ATP-binding</keyword>
<keyword id="KW-0173">Coenzyme A biosynthesis</keyword>
<keyword id="KW-0963">Cytoplasm</keyword>
<keyword id="KW-0460">Magnesium</keyword>
<keyword id="KW-0547">Nucleotide-binding</keyword>
<keyword id="KW-0548">Nucleotidyltransferase</keyword>
<keyword id="KW-0808">Transferase</keyword>
<organism>
    <name type="scientific">Leptospira interrogans serogroup Icterohaemorrhagiae serovar copenhageni (strain Fiocruz L1-130)</name>
    <dbReference type="NCBI Taxonomy" id="267671"/>
    <lineage>
        <taxon>Bacteria</taxon>
        <taxon>Pseudomonadati</taxon>
        <taxon>Spirochaetota</taxon>
        <taxon>Spirochaetia</taxon>
        <taxon>Leptospirales</taxon>
        <taxon>Leptospiraceae</taxon>
        <taxon>Leptospira</taxon>
    </lineage>
</organism>
<feature type="chain" id="PRO_0000156228" description="Phosphopantetheine adenylyltransferase">
    <location>
        <begin position="1"/>
        <end position="160"/>
    </location>
</feature>
<feature type="binding site" evidence="1">
    <location>
        <begin position="10"/>
        <end position="11"/>
    </location>
    <ligand>
        <name>ATP</name>
        <dbReference type="ChEBI" id="CHEBI:30616"/>
    </ligand>
</feature>
<feature type="binding site" evidence="1">
    <location>
        <position position="10"/>
    </location>
    <ligand>
        <name>substrate</name>
    </ligand>
</feature>
<feature type="binding site" evidence="1">
    <location>
        <position position="18"/>
    </location>
    <ligand>
        <name>ATP</name>
        <dbReference type="ChEBI" id="CHEBI:30616"/>
    </ligand>
</feature>
<feature type="binding site" evidence="1">
    <location>
        <position position="42"/>
    </location>
    <ligand>
        <name>substrate</name>
    </ligand>
</feature>
<feature type="binding site" evidence="1">
    <location>
        <position position="74"/>
    </location>
    <ligand>
        <name>substrate</name>
    </ligand>
</feature>
<feature type="binding site" evidence="1">
    <location>
        <position position="88"/>
    </location>
    <ligand>
        <name>substrate</name>
    </ligand>
</feature>
<feature type="binding site" evidence="1">
    <location>
        <begin position="89"/>
        <end position="91"/>
    </location>
    <ligand>
        <name>ATP</name>
        <dbReference type="ChEBI" id="CHEBI:30616"/>
    </ligand>
</feature>
<feature type="binding site" evidence="1">
    <location>
        <position position="99"/>
    </location>
    <ligand>
        <name>ATP</name>
        <dbReference type="ChEBI" id="CHEBI:30616"/>
    </ligand>
</feature>
<feature type="binding site" evidence="1">
    <location>
        <begin position="124"/>
        <end position="130"/>
    </location>
    <ligand>
        <name>ATP</name>
        <dbReference type="ChEBI" id="CHEBI:30616"/>
    </ligand>
</feature>
<feature type="site" description="Transition state stabilizer" evidence="1">
    <location>
        <position position="18"/>
    </location>
</feature>
<comment type="function">
    <text evidence="1">Reversibly transfers an adenylyl group from ATP to 4'-phosphopantetheine, yielding dephospho-CoA (dPCoA) and pyrophosphate.</text>
</comment>
<comment type="catalytic activity">
    <reaction evidence="1">
        <text>(R)-4'-phosphopantetheine + ATP + H(+) = 3'-dephospho-CoA + diphosphate</text>
        <dbReference type="Rhea" id="RHEA:19801"/>
        <dbReference type="ChEBI" id="CHEBI:15378"/>
        <dbReference type="ChEBI" id="CHEBI:30616"/>
        <dbReference type="ChEBI" id="CHEBI:33019"/>
        <dbReference type="ChEBI" id="CHEBI:57328"/>
        <dbReference type="ChEBI" id="CHEBI:61723"/>
        <dbReference type="EC" id="2.7.7.3"/>
    </reaction>
</comment>
<comment type="cofactor">
    <cofactor evidence="1">
        <name>Mg(2+)</name>
        <dbReference type="ChEBI" id="CHEBI:18420"/>
    </cofactor>
</comment>
<comment type="pathway">
    <text evidence="1">Cofactor biosynthesis; coenzyme A biosynthesis; CoA from (R)-pantothenate: step 4/5.</text>
</comment>
<comment type="subunit">
    <text evidence="1">Homohexamer.</text>
</comment>
<comment type="subcellular location">
    <subcellularLocation>
        <location evidence="1">Cytoplasm</location>
    </subcellularLocation>
</comment>
<comment type="similarity">
    <text evidence="1">Belongs to the bacterial CoaD family.</text>
</comment>
<protein>
    <recommendedName>
        <fullName evidence="1">Phosphopantetheine adenylyltransferase</fullName>
        <ecNumber evidence="1">2.7.7.3</ecNumber>
    </recommendedName>
    <alternativeName>
        <fullName evidence="1">Dephospho-CoA pyrophosphorylase</fullName>
    </alternativeName>
    <alternativeName>
        <fullName evidence="1">Pantetheine-phosphate adenylyltransferase</fullName>
        <shortName evidence="1">PPAT</shortName>
    </alternativeName>
</protein>
<dbReference type="EC" id="2.7.7.3" evidence="1"/>
<dbReference type="EMBL" id="AE016823">
    <property type="protein sequence ID" value="AAS71867.1"/>
    <property type="molecule type" value="Genomic_DNA"/>
</dbReference>
<dbReference type="RefSeq" id="WP_000681221.1">
    <property type="nucleotide sequence ID" value="NC_005823.1"/>
</dbReference>
<dbReference type="SMR" id="Q72M66"/>
<dbReference type="GeneID" id="61143191"/>
<dbReference type="KEGG" id="lic:LIC_13325"/>
<dbReference type="HOGENOM" id="CLU_100149_0_1_12"/>
<dbReference type="UniPathway" id="UPA00241">
    <property type="reaction ID" value="UER00355"/>
</dbReference>
<dbReference type="Proteomes" id="UP000007037">
    <property type="component" value="Chromosome I"/>
</dbReference>
<dbReference type="GO" id="GO:0005737">
    <property type="term" value="C:cytoplasm"/>
    <property type="evidence" value="ECO:0007669"/>
    <property type="project" value="UniProtKB-SubCell"/>
</dbReference>
<dbReference type="GO" id="GO:0005524">
    <property type="term" value="F:ATP binding"/>
    <property type="evidence" value="ECO:0007669"/>
    <property type="project" value="UniProtKB-KW"/>
</dbReference>
<dbReference type="GO" id="GO:0004595">
    <property type="term" value="F:pantetheine-phosphate adenylyltransferase activity"/>
    <property type="evidence" value="ECO:0007669"/>
    <property type="project" value="UniProtKB-UniRule"/>
</dbReference>
<dbReference type="GO" id="GO:0015937">
    <property type="term" value="P:coenzyme A biosynthetic process"/>
    <property type="evidence" value="ECO:0007669"/>
    <property type="project" value="UniProtKB-UniRule"/>
</dbReference>
<dbReference type="CDD" id="cd02163">
    <property type="entry name" value="PPAT"/>
    <property type="match status" value="1"/>
</dbReference>
<dbReference type="Gene3D" id="3.40.50.620">
    <property type="entry name" value="HUPs"/>
    <property type="match status" value="1"/>
</dbReference>
<dbReference type="HAMAP" id="MF_00151">
    <property type="entry name" value="PPAT_bact"/>
    <property type="match status" value="1"/>
</dbReference>
<dbReference type="InterPro" id="IPR004821">
    <property type="entry name" value="Cyt_trans-like"/>
</dbReference>
<dbReference type="InterPro" id="IPR001980">
    <property type="entry name" value="PPAT"/>
</dbReference>
<dbReference type="InterPro" id="IPR014729">
    <property type="entry name" value="Rossmann-like_a/b/a_fold"/>
</dbReference>
<dbReference type="NCBIfam" id="TIGR01510">
    <property type="entry name" value="coaD_prev_kdtB"/>
    <property type="match status" value="1"/>
</dbReference>
<dbReference type="NCBIfam" id="TIGR00125">
    <property type="entry name" value="cyt_tran_rel"/>
    <property type="match status" value="1"/>
</dbReference>
<dbReference type="PANTHER" id="PTHR21342">
    <property type="entry name" value="PHOSPHOPANTETHEINE ADENYLYLTRANSFERASE"/>
    <property type="match status" value="1"/>
</dbReference>
<dbReference type="PANTHER" id="PTHR21342:SF1">
    <property type="entry name" value="PHOSPHOPANTETHEINE ADENYLYLTRANSFERASE"/>
    <property type="match status" value="1"/>
</dbReference>
<dbReference type="Pfam" id="PF01467">
    <property type="entry name" value="CTP_transf_like"/>
    <property type="match status" value="1"/>
</dbReference>
<dbReference type="PRINTS" id="PR01020">
    <property type="entry name" value="LPSBIOSNTHSS"/>
</dbReference>
<dbReference type="SUPFAM" id="SSF52374">
    <property type="entry name" value="Nucleotidylyl transferase"/>
    <property type="match status" value="1"/>
</dbReference>